<keyword id="KW-0963">Cytoplasm</keyword>
<keyword id="KW-0448">Lipopolysaccharide biosynthesis</keyword>
<keyword id="KW-0548">Nucleotidyltransferase</keyword>
<keyword id="KW-1185">Reference proteome</keyword>
<keyword id="KW-0808">Transferase</keyword>
<feature type="chain" id="PRO_0000370060" description="3-deoxy-manno-octulosonate cytidylyltransferase">
    <location>
        <begin position="1"/>
        <end position="248"/>
    </location>
</feature>
<accession>A8ZWH0</accession>
<protein>
    <recommendedName>
        <fullName evidence="1">3-deoxy-manno-octulosonate cytidylyltransferase</fullName>
        <ecNumber evidence="1">2.7.7.38</ecNumber>
    </recommendedName>
    <alternativeName>
        <fullName evidence="1">CMP-2-keto-3-deoxyoctulosonic acid synthase</fullName>
        <shortName evidence="1">CKS</shortName>
        <shortName evidence="1">CMP-KDO synthase</shortName>
    </alternativeName>
</protein>
<sequence>MKIAAIIPSRYGSTRFAGKPLAPIAGIPMIQRVYDQVKQAICVTDIAVATDDRRIVEAVTRFGGNALMTSAACRSGTDRAAEAAKQMGLAPEDIVVNIQGDQPLIAPQTIDETLAPLLSDPDLGMTTAAFAIMDKQEITNPKDVKMVFDADGFALYFSRSPIPFARDKDTRFDTFKHLGIYAYTRRFLDIFTQLPNGVLEEIEKLEQLRALEHSHRIKTVVTRYDSPEVDIPEDIPRIEAMMASMAAD</sequence>
<proteinExistence type="inferred from homology"/>
<organism>
    <name type="scientific">Desulfosudis oleivorans (strain DSM 6200 / JCM 39069 / Hxd3)</name>
    <name type="common">Desulfococcus oleovorans</name>
    <dbReference type="NCBI Taxonomy" id="96561"/>
    <lineage>
        <taxon>Bacteria</taxon>
        <taxon>Pseudomonadati</taxon>
        <taxon>Thermodesulfobacteriota</taxon>
        <taxon>Desulfobacteria</taxon>
        <taxon>Desulfobacterales</taxon>
        <taxon>Desulfosudaceae</taxon>
        <taxon>Desulfosudis</taxon>
    </lineage>
</organism>
<evidence type="ECO:0000255" key="1">
    <source>
        <dbReference type="HAMAP-Rule" id="MF_00057"/>
    </source>
</evidence>
<name>KDSB_DESOH</name>
<reference key="1">
    <citation type="submission" date="2007-10" db="EMBL/GenBank/DDBJ databases">
        <title>Complete sequence of Desulfococcus oleovorans Hxd3.</title>
        <authorList>
            <consortium name="US DOE Joint Genome Institute"/>
            <person name="Copeland A."/>
            <person name="Lucas S."/>
            <person name="Lapidus A."/>
            <person name="Barry K."/>
            <person name="Glavina del Rio T."/>
            <person name="Dalin E."/>
            <person name="Tice H."/>
            <person name="Pitluck S."/>
            <person name="Kiss H."/>
            <person name="Brettin T."/>
            <person name="Bruce D."/>
            <person name="Detter J.C."/>
            <person name="Han C."/>
            <person name="Schmutz J."/>
            <person name="Larimer F."/>
            <person name="Land M."/>
            <person name="Hauser L."/>
            <person name="Kyrpides N."/>
            <person name="Kim E."/>
            <person name="Wawrik B."/>
            <person name="Richardson P."/>
        </authorList>
    </citation>
    <scope>NUCLEOTIDE SEQUENCE [LARGE SCALE GENOMIC DNA]</scope>
    <source>
        <strain>DSM 6200 / JCM 39069 / Hxd3</strain>
    </source>
</reference>
<dbReference type="EC" id="2.7.7.38" evidence="1"/>
<dbReference type="EMBL" id="CP000859">
    <property type="protein sequence ID" value="ABW66778.1"/>
    <property type="molecule type" value="Genomic_DNA"/>
</dbReference>
<dbReference type="RefSeq" id="WP_012174396.1">
    <property type="nucleotide sequence ID" value="NC_009943.1"/>
</dbReference>
<dbReference type="SMR" id="A8ZWH0"/>
<dbReference type="STRING" id="96561.Dole_0968"/>
<dbReference type="KEGG" id="dol:Dole_0968"/>
<dbReference type="eggNOG" id="COG1212">
    <property type="taxonomic scope" value="Bacteria"/>
</dbReference>
<dbReference type="HOGENOM" id="CLU_065038_0_1_7"/>
<dbReference type="OrthoDB" id="9815559at2"/>
<dbReference type="UniPathway" id="UPA00030"/>
<dbReference type="UniPathway" id="UPA00358">
    <property type="reaction ID" value="UER00476"/>
</dbReference>
<dbReference type="Proteomes" id="UP000008561">
    <property type="component" value="Chromosome"/>
</dbReference>
<dbReference type="GO" id="GO:0005829">
    <property type="term" value="C:cytosol"/>
    <property type="evidence" value="ECO:0007669"/>
    <property type="project" value="TreeGrafter"/>
</dbReference>
<dbReference type="GO" id="GO:0008690">
    <property type="term" value="F:3-deoxy-manno-octulosonate cytidylyltransferase activity"/>
    <property type="evidence" value="ECO:0007669"/>
    <property type="project" value="UniProtKB-UniRule"/>
</dbReference>
<dbReference type="GO" id="GO:0033468">
    <property type="term" value="P:CMP-keto-3-deoxy-D-manno-octulosonic acid biosynthetic process"/>
    <property type="evidence" value="ECO:0007669"/>
    <property type="project" value="UniProtKB-UniRule"/>
</dbReference>
<dbReference type="GO" id="GO:0009103">
    <property type="term" value="P:lipopolysaccharide biosynthetic process"/>
    <property type="evidence" value="ECO:0007669"/>
    <property type="project" value="UniProtKB-UniRule"/>
</dbReference>
<dbReference type="CDD" id="cd02517">
    <property type="entry name" value="CMP-KDO-Synthetase"/>
    <property type="match status" value="1"/>
</dbReference>
<dbReference type="FunFam" id="3.90.550.10:FF:000011">
    <property type="entry name" value="3-deoxy-manno-octulosonate cytidylyltransferase"/>
    <property type="match status" value="1"/>
</dbReference>
<dbReference type="Gene3D" id="3.90.550.10">
    <property type="entry name" value="Spore Coat Polysaccharide Biosynthesis Protein SpsA, Chain A"/>
    <property type="match status" value="1"/>
</dbReference>
<dbReference type="HAMAP" id="MF_00057">
    <property type="entry name" value="KdsB"/>
    <property type="match status" value="1"/>
</dbReference>
<dbReference type="InterPro" id="IPR003329">
    <property type="entry name" value="Cytidylyl_trans"/>
</dbReference>
<dbReference type="InterPro" id="IPR004528">
    <property type="entry name" value="KdsB"/>
</dbReference>
<dbReference type="InterPro" id="IPR029044">
    <property type="entry name" value="Nucleotide-diphossugar_trans"/>
</dbReference>
<dbReference type="NCBIfam" id="TIGR00466">
    <property type="entry name" value="kdsB"/>
    <property type="match status" value="1"/>
</dbReference>
<dbReference type="NCBIfam" id="NF003950">
    <property type="entry name" value="PRK05450.1-3"/>
    <property type="match status" value="1"/>
</dbReference>
<dbReference type="NCBIfam" id="NF003952">
    <property type="entry name" value="PRK05450.1-5"/>
    <property type="match status" value="1"/>
</dbReference>
<dbReference type="NCBIfam" id="NF009905">
    <property type="entry name" value="PRK13368.1"/>
    <property type="match status" value="1"/>
</dbReference>
<dbReference type="PANTHER" id="PTHR42866">
    <property type="entry name" value="3-DEOXY-MANNO-OCTULOSONATE CYTIDYLYLTRANSFERASE"/>
    <property type="match status" value="1"/>
</dbReference>
<dbReference type="PANTHER" id="PTHR42866:SF2">
    <property type="entry name" value="3-DEOXY-MANNO-OCTULOSONATE CYTIDYLYLTRANSFERASE, MITOCHONDRIAL"/>
    <property type="match status" value="1"/>
</dbReference>
<dbReference type="Pfam" id="PF02348">
    <property type="entry name" value="CTP_transf_3"/>
    <property type="match status" value="1"/>
</dbReference>
<dbReference type="SUPFAM" id="SSF53448">
    <property type="entry name" value="Nucleotide-diphospho-sugar transferases"/>
    <property type="match status" value="1"/>
</dbReference>
<gene>
    <name evidence="1" type="primary">kdsB</name>
    <name type="ordered locus">Dole_0968</name>
</gene>
<comment type="function">
    <text evidence="1">Activates KDO (a required 8-carbon sugar) for incorporation into bacterial lipopolysaccharide in Gram-negative bacteria.</text>
</comment>
<comment type="catalytic activity">
    <reaction evidence="1">
        <text>3-deoxy-alpha-D-manno-oct-2-ulosonate + CTP = CMP-3-deoxy-beta-D-manno-octulosonate + diphosphate</text>
        <dbReference type="Rhea" id="RHEA:23448"/>
        <dbReference type="ChEBI" id="CHEBI:33019"/>
        <dbReference type="ChEBI" id="CHEBI:37563"/>
        <dbReference type="ChEBI" id="CHEBI:85986"/>
        <dbReference type="ChEBI" id="CHEBI:85987"/>
        <dbReference type="EC" id="2.7.7.38"/>
    </reaction>
</comment>
<comment type="pathway">
    <text evidence="1">Nucleotide-sugar biosynthesis; CMP-3-deoxy-D-manno-octulosonate biosynthesis; CMP-3-deoxy-D-manno-octulosonate from 3-deoxy-D-manno-octulosonate and CTP: step 1/1.</text>
</comment>
<comment type="pathway">
    <text evidence="1">Bacterial outer membrane biogenesis; lipopolysaccharide biosynthesis.</text>
</comment>
<comment type="subcellular location">
    <subcellularLocation>
        <location evidence="1">Cytoplasm</location>
    </subcellularLocation>
</comment>
<comment type="similarity">
    <text evidence="1">Belongs to the KdsB family.</text>
</comment>